<proteinExistence type="evidence at protein level"/>
<name>HBA1_ELEMC</name>
<protein>
    <recommendedName>
        <fullName evidence="1">Hemoglobin subunit alpha 1</fullName>
    </recommendedName>
    <alternativeName>
        <fullName evidence="1">Alpha-1-globin</fullName>
    </alternativeName>
    <alternativeName>
        <fullName evidence="5">Hemoglobin alpha-1 chain</fullName>
    </alternativeName>
</protein>
<keyword id="KW-0002">3D-structure</keyword>
<keyword id="KW-0007">Acetylation</keyword>
<keyword id="KW-0903">Direct protein sequencing</keyword>
<keyword id="KW-0349">Heme</keyword>
<keyword id="KW-0408">Iron</keyword>
<keyword id="KW-0479">Metal-binding</keyword>
<keyword id="KW-0561">Oxygen transport</keyword>
<keyword id="KW-0813">Transport</keyword>
<accession>K7N5M5</accession>
<accession>P86713</accession>
<gene>
    <name evidence="1" type="primary">hba1</name>
</gene>
<sequence length="142" mass="15636">SLSDKDKAAVKLLWSKISKSSDAIGNDALSRMIVVYPQTKTYFAHWPDLSPGSPHVKAHGKTVMGGIALAVSKIDDLRAGLLDLSEQHAYKLRVDPANFKILSHCILVVISMMFPKEFTPEAHVSLDKFLSGVSLALSERYR</sequence>
<feature type="chain" id="PRO_0000430573" description="Hemoglobin subunit alpha 1">
    <location>
        <begin position="1"/>
        <end position="142"/>
    </location>
</feature>
<feature type="domain" description="Globin" evidence="2">
    <location>
        <begin position="1"/>
        <end position="142"/>
    </location>
</feature>
<feature type="binding site" evidence="2 4">
    <location>
        <position position="59"/>
    </location>
    <ligand>
        <name>O2</name>
        <dbReference type="ChEBI" id="CHEBI:15379"/>
    </ligand>
</feature>
<feature type="binding site" description="proximal binding residue" evidence="2 4">
    <location>
        <position position="88"/>
    </location>
    <ligand>
        <name>heme b</name>
        <dbReference type="ChEBI" id="CHEBI:60344"/>
    </ligand>
    <ligandPart>
        <name>Fe</name>
        <dbReference type="ChEBI" id="CHEBI:18248"/>
    </ligandPart>
</feature>
<feature type="modified residue" description="N-acetylserine" evidence="7">
    <location>
        <position position="1"/>
    </location>
</feature>
<feature type="helix" evidence="8">
    <location>
        <begin position="4"/>
        <end position="17"/>
    </location>
</feature>
<feature type="helix" evidence="8">
    <location>
        <begin position="18"/>
        <end position="20"/>
    </location>
</feature>
<feature type="helix" evidence="8">
    <location>
        <begin position="21"/>
        <end position="35"/>
    </location>
</feature>
<feature type="helix" evidence="8">
    <location>
        <begin position="37"/>
        <end position="43"/>
    </location>
</feature>
<feature type="helix" evidence="9">
    <location>
        <begin position="47"/>
        <end position="49"/>
    </location>
</feature>
<feature type="helix" evidence="8">
    <location>
        <begin position="54"/>
        <end position="72"/>
    </location>
</feature>
<feature type="turn" evidence="8">
    <location>
        <begin position="73"/>
        <end position="75"/>
    </location>
</feature>
<feature type="helix" evidence="8">
    <location>
        <begin position="77"/>
        <end position="80"/>
    </location>
</feature>
<feature type="helix" evidence="8">
    <location>
        <begin position="82"/>
        <end position="89"/>
    </location>
</feature>
<feature type="turn" evidence="9">
    <location>
        <begin position="90"/>
        <end position="92"/>
    </location>
</feature>
<feature type="helix" evidence="8">
    <location>
        <begin position="96"/>
        <end position="113"/>
    </location>
</feature>
<feature type="turn" evidence="8">
    <location>
        <begin position="115"/>
        <end position="117"/>
    </location>
</feature>
<feature type="helix" evidence="8">
    <location>
        <begin position="120"/>
        <end position="137"/>
    </location>
</feature>
<feature type="turn" evidence="8">
    <location>
        <begin position="138"/>
        <end position="140"/>
    </location>
</feature>
<comment type="function">
    <text evidence="5">Involved in oxygen transport from gills to the various peripheral tissues.</text>
</comment>
<comment type="subunit">
    <text evidence="4">Hb1 is a heterotetramer of two alpha-1 chains and two beta-1 chains. Hb2 is a heterotetramer of two alpha-2 chains and two beta-1 chains. HbC is a heterotetramer of two alpha-1 chains and two beta-2 chains.</text>
</comment>
<comment type="tissue specificity">
    <text evidence="6">Red blood cells.</text>
</comment>
<comment type="miscellaneous">
    <text evidence="4">This fish has three hemoglobins: Hb1, Hb2 and HbC accounting for about 70%, 5% and 25% of the total, respectively. Hb1 has high oxygen affinity and displays strong Bohr, Root and phosphate effects.</text>
</comment>
<comment type="similarity">
    <text evidence="3">Belongs to the globin family.</text>
</comment>
<evidence type="ECO:0000250" key="1">
    <source>
        <dbReference type="UniProtKB" id="P10777"/>
    </source>
</evidence>
<evidence type="ECO:0000255" key="2">
    <source>
        <dbReference type="PROSITE-ProRule" id="PRU00238"/>
    </source>
</evidence>
<evidence type="ECO:0000255" key="3">
    <source>
        <dbReference type="RuleBase" id="RU000356"/>
    </source>
</evidence>
<evidence type="ECO:0000269" key="4">
    <source>
    </source>
</evidence>
<evidence type="ECO:0000303" key="5">
    <source>
    </source>
</evidence>
<evidence type="ECO:0000305" key="6"/>
<evidence type="ECO:0000312" key="7">
    <source>
        <dbReference type="PDB" id="4ESA"/>
    </source>
</evidence>
<evidence type="ECO:0007829" key="8">
    <source>
        <dbReference type="PDB" id="4ESA"/>
    </source>
</evidence>
<evidence type="ECO:0007829" key="9">
    <source>
        <dbReference type="PDB" id="6RP5"/>
    </source>
</evidence>
<dbReference type="PDB" id="4ESA">
    <property type="method" value="X-ray"/>
    <property type="resolution" value="1.45 A"/>
    <property type="chains" value="A/C=1-142"/>
</dbReference>
<dbReference type="PDB" id="6RP5">
    <property type="method" value="X-ray"/>
    <property type="resolution" value="1.49 A"/>
    <property type="chains" value="A=1-142"/>
</dbReference>
<dbReference type="PDBsum" id="4ESA"/>
<dbReference type="PDBsum" id="6RP5"/>
<dbReference type="SMR" id="K7N5M5"/>
<dbReference type="EvolutionaryTrace" id="K7N5M5"/>
<dbReference type="GO" id="GO:0072562">
    <property type="term" value="C:blood microparticle"/>
    <property type="evidence" value="ECO:0007669"/>
    <property type="project" value="TreeGrafter"/>
</dbReference>
<dbReference type="GO" id="GO:0031838">
    <property type="term" value="C:haptoglobin-hemoglobin complex"/>
    <property type="evidence" value="ECO:0007669"/>
    <property type="project" value="TreeGrafter"/>
</dbReference>
<dbReference type="GO" id="GO:0005833">
    <property type="term" value="C:hemoglobin complex"/>
    <property type="evidence" value="ECO:0007669"/>
    <property type="project" value="InterPro"/>
</dbReference>
<dbReference type="GO" id="GO:0031720">
    <property type="term" value="F:haptoglobin binding"/>
    <property type="evidence" value="ECO:0007669"/>
    <property type="project" value="TreeGrafter"/>
</dbReference>
<dbReference type="GO" id="GO:0020037">
    <property type="term" value="F:heme binding"/>
    <property type="evidence" value="ECO:0007669"/>
    <property type="project" value="InterPro"/>
</dbReference>
<dbReference type="GO" id="GO:0005506">
    <property type="term" value="F:iron ion binding"/>
    <property type="evidence" value="ECO:0007669"/>
    <property type="project" value="InterPro"/>
</dbReference>
<dbReference type="GO" id="GO:0043177">
    <property type="term" value="F:organic acid binding"/>
    <property type="evidence" value="ECO:0007669"/>
    <property type="project" value="TreeGrafter"/>
</dbReference>
<dbReference type="GO" id="GO:0019825">
    <property type="term" value="F:oxygen binding"/>
    <property type="evidence" value="ECO:0007669"/>
    <property type="project" value="InterPro"/>
</dbReference>
<dbReference type="GO" id="GO:0005344">
    <property type="term" value="F:oxygen carrier activity"/>
    <property type="evidence" value="ECO:0007669"/>
    <property type="project" value="UniProtKB-KW"/>
</dbReference>
<dbReference type="GO" id="GO:0004601">
    <property type="term" value="F:peroxidase activity"/>
    <property type="evidence" value="ECO:0007669"/>
    <property type="project" value="TreeGrafter"/>
</dbReference>
<dbReference type="GO" id="GO:0042744">
    <property type="term" value="P:hydrogen peroxide catabolic process"/>
    <property type="evidence" value="ECO:0007669"/>
    <property type="project" value="TreeGrafter"/>
</dbReference>
<dbReference type="CDD" id="cd08927">
    <property type="entry name" value="Hb-alpha-like"/>
    <property type="match status" value="1"/>
</dbReference>
<dbReference type="FunFam" id="1.10.490.10:FF:000002">
    <property type="entry name" value="Hemoglobin subunit alpha"/>
    <property type="match status" value="1"/>
</dbReference>
<dbReference type="Gene3D" id="1.10.490.10">
    <property type="entry name" value="Globins"/>
    <property type="match status" value="1"/>
</dbReference>
<dbReference type="InterPro" id="IPR000971">
    <property type="entry name" value="Globin"/>
</dbReference>
<dbReference type="InterPro" id="IPR009050">
    <property type="entry name" value="Globin-like_sf"/>
</dbReference>
<dbReference type="InterPro" id="IPR012292">
    <property type="entry name" value="Globin/Proto"/>
</dbReference>
<dbReference type="InterPro" id="IPR002338">
    <property type="entry name" value="Hemoglobin_a-typ"/>
</dbReference>
<dbReference type="InterPro" id="IPR050056">
    <property type="entry name" value="Hemoglobin_oxygen_transport"/>
</dbReference>
<dbReference type="InterPro" id="IPR002339">
    <property type="entry name" value="Hemoglobin_pi"/>
</dbReference>
<dbReference type="PANTHER" id="PTHR11442">
    <property type="entry name" value="HEMOGLOBIN FAMILY MEMBER"/>
    <property type="match status" value="1"/>
</dbReference>
<dbReference type="PANTHER" id="PTHR11442:SF41">
    <property type="entry name" value="HEMOGLOBIN SUBUNIT ZETA"/>
    <property type="match status" value="1"/>
</dbReference>
<dbReference type="Pfam" id="PF00042">
    <property type="entry name" value="Globin"/>
    <property type="match status" value="1"/>
</dbReference>
<dbReference type="PRINTS" id="PR00612">
    <property type="entry name" value="ALPHAHAEM"/>
</dbReference>
<dbReference type="PRINTS" id="PR00815">
    <property type="entry name" value="PIHAEM"/>
</dbReference>
<dbReference type="SUPFAM" id="SSF46458">
    <property type="entry name" value="Globin-like"/>
    <property type="match status" value="1"/>
</dbReference>
<dbReference type="PROSITE" id="PS01033">
    <property type="entry name" value="GLOBIN"/>
    <property type="match status" value="1"/>
</dbReference>
<reference evidence="7" key="1">
    <citation type="journal article" date="2012" name="Mol. Biosyst.">
        <title>ATP regulation of the ligand-binding properties in temperate and cold-adapted haemoglobins. X-ray structure and ligand-binding kinetics in the sub-Antarctic fish Eleginops maclovinus.</title>
        <authorList>
            <person name="Coppola D."/>
            <person name="Abbruzzetti S."/>
            <person name="Nicoletti F."/>
            <person name="Merlino A."/>
            <person name="Gambacurta A."/>
            <person name="Giordano D."/>
            <person name="Howes B.D."/>
            <person name="De Sanctis G."/>
            <person name="Vitagliano L."/>
            <person name="Bruno S."/>
            <person name="di Prisco G."/>
            <person name="Mazzarella L."/>
            <person name="Smulevich G."/>
            <person name="Coletta M."/>
            <person name="Viappiani C."/>
            <person name="Vergara A."/>
            <person name="Verde C."/>
        </authorList>
    </citation>
    <scope>PROTEIN SEQUENCE</scope>
    <scope>FUNCTION</scope>
    <scope>SUBUNIT</scope>
    <scope>X-RAY CRYSTALLOGRAPHY (1.45 ANGSTROMS) OF 1-142 IN COMPLEX WITH HEME AND CARBON MONOXIDE</scope>
    <scope>ACETYLATION AT SER-1</scope>
    <source>
        <tissue evidence="5">Blood</tissue>
    </source>
</reference>
<organism evidence="7">
    <name type="scientific">Eleginops maclovinus</name>
    <name type="common">Patagonian blennie</name>
    <name type="synonym">Eleginus maclovinus</name>
    <dbReference type="NCBI Taxonomy" id="56733"/>
    <lineage>
        <taxon>Eukaryota</taxon>
        <taxon>Metazoa</taxon>
        <taxon>Chordata</taxon>
        <taxon>Craniata</taxon>
        <taxon>Vertebrata</taxon>
        <taxon>Euteleostomi</taxon>
        <taxon>Actinopterygii</taxon>
        <taxon>Neopterygii</taxon>
        <taxon>Teleostei</taxon>
        <taxon>Neoteleostei</taxon>
        <taxon>Acanthomorphata</taxon>
        <taxon>Eupercaria</taxon>
        <taxon>Perciformes</taxon>
        <taxon>Notothenioidei</taxon>
        <taxon>Eleginopidae</taxon>
        <taxon>Eleginops</taxon>
    </lineage>
</organism>